<dbReference type="EC" id="1.2.1.38" evidence="1"/>
<dbReference type="EMBL" id="CP001344">
    <property type="protein sequence ID" value="ACL44895.1"/>
    <property type="molecule type" value="Genomic_DNA"/>
</dbReference>
<dbReference type="SMR" id="B8HY92"/>
<dbReference type="STRING" id="395961.Cyan7425_2538"/>
<dbReference type="KEGG" id="cyn:Cyan7425_2538"/>
<dbReference type="eggNOG" id="COG0002">
    <property type="taxonomic scope" value="Bacteria"/>
</dbReference>
<dbReference type="HOGENOM" id="CLU_006384_0_1_3"/>
<dbReference type="OrthoDB" id="9801289at2"/>
<dbReference type="UniPathway" id="UPA00068">
    <property type="reaction ID" value="UER00108"/>
</dbReference>
<dbReference type="GO" id="GO:0005737">
    <property type="term" value="C:cytoplasm"/>
    <property type="evidence" value="ECO:0007669"/>
    <property type="project" value="UniProtKB-SubCell"/>
</dbReference>
<dbReference type="GO" id="GO:0003942">
    <property type="term" value="F:N-acetyl-gamma-glutamyl-phosphate reductase activity"/>
    <property type="evidence" value="ECO:0007669"/>
    <property type="project" value="UniProtKB-UniRule"/>
</dbReference>
<dbReference type="GO" id="GO:0051287">
    <property type="term" value="F:NAD binding"/>
    <property type="evidence" value="ECO:0007669"/>
    <property type="project" value="InterPro"/>
</dbReference>
<dbReference type="GO" id="GO:0070401">
    <property type="term" value="F:NADP+ binding"/>
    <property type="evidence" value="ECO:0007669"/>
    <property type="project" value="InterPro"/>
</dbReference>
<dbReference type="GO" id="GO:0006526">
    <property type="term" value="P:L-arginine biosynthetic process"/>
    <property type="evidence" value="ECO:0007669"/>
    <property type="project" value="UniProtKB-UniRule"/>
</dbReference>
<dbReference type="CDD" id="cd23934">
    <property type="entry name" value="AGPR_1_C"/>
    <property type="match status" value="1"/>
</dbReference>
<dbReference type="CDD" id="cd17895">
    <property type="entry name" value="AGPR_1_N"/>
    <property type="match status" value="1"/>
</dbReference>
<dbReference type="FunFam" id="3.30.360.10:FF:000014">
    <property type="entry name" value="N-acetyl-gamma-glutamyl-phosphate reductase"/>
    <property type="match status" value="1"/>
</dbReference>
<dbReference type="Gene3D" id="3.30.360.10">
    <property type="entry name" value="Dihydrodipicolinate Reductase, domain 2"/>
    <property type="match status" value="1"/>
</dbReference>
<dbReference type="Gene3D" id="3.40.50.720">
    <property type="entry name" value="NAD(P)-binding Rossmann-like Domain"/>
    <property type="match status" value="1"/>
</dbReference>
<dbReference type="HAMAP" id="MF_00150">
    <property type="entry name" value="ArgC_type1"/>
    <property type="match status" value="1"/>
</dbReference>
<dbReference type="InterPro" id="IPR023013">
    <property type="entry name" value="AGPR_AS"/>
</dbReference>
<dbReference type="InterPro" id="IPR000706">
    <property type="entry name" value="AGPR_type-1"/>
</dbReference>
<dbReference type="InterPro" id="IPR036291">
    <property type="entry name" value="NAD(P)-bd_dom_sf"/>
</dbReference>
<dbReference type="InterPro" id="IPR050085">
    <property type="entry name" value="NAGSA_dehydrogenase"/>
</dbReference>
<dbReference type="InterPro" id="IPR000534">
    <property type="entry name" value="Semialdehyde_DH_NAD-bd"/>
</dbReference>
<dbReference type="NCBIfam" id="TIGR01850">
    <property type="entry name" value="argC"/>
    <property type="match status" value="1"/>
</dbReference>
<dbReference type="PANTHER" id="PTHR32338:SF10">
    <property type="entry name" value="N-ACETYL-GAMMA-GLUTAMYL-PHOSPHATE REDUCTASE, CHLOROPLASTIC-RELATED"/>
    <property type="match status" value="1"/>
</dbReference>
<dbReference type="PANTHER" id="PTHR32338">
    <property type="entry name" value="N-ACETYL-GAMMA-GLUTAMYL-PHOSPHATE REDUCTASE, CHLOROPLASTIC-RELATED-RELATED"/>
    <property type="match status" value="1"/>
</dbReference>
<dbReference type="Pfam" id="PF01118">
    <property type="entry name" value="Semialdhyde_dh"/>
    <property type="match status" value="1"/>
</dbReference>
<dbReference type="Pfam" id="PF22698">
    <property type="entry name" value="Semialdhyde_dhC_1"/>
    <property type="match status" value="1"/>
</dbReference>
<dbReference type="SMART" id="SM00859">
    <property type="entry name" value="Semialdhyde_dh"/>
    <property type="match status" value="1"/>
</dbReference>
<dbReference type="SUPFAM" id="SSF55347">
    <property type="entry name" value="Glyceraldehyde-3-phosphate dehydrogenase-like, C-terminal domain"/>
    <property type="match status" value="1"/>
</dbReference>
<dbReference type="SUPFAM" id="SSF51735">
    <property type="entry name" value="NAD(P)-binding Rossmann-fold domains"/>
    <property type="match status" value="1"/>
</dbReference>
<dbReference type="PROSITE" id="PS01224">
    <property type="entry name" value="ARGC"/>
    <property type="match status" value="1"/>
</dbReference>
<protein>
    <recommendedName>
        <fullName evidence="1">N-acetyl-gamma-glutamyl-phosphate reductase</fullName>
        <shortName evidence="1">AGPR</shortName>
        <ecNumber evidence="1">1.2.1.38</ecNumber>
    </recommendedName>
    <alternativeName>
        <fullName evidence="1">N-acetyl-glutamate semialdehyde dehydrogenase</fullName>
        <shortName evidence="1">NAGSA dehydrogenase</shortName>
    </alternativeName>
</protein>
<comment type="function">
    <text evidence="1">Catalyzes the NADPH-dependent reduction of N-acetyl-5-glutamyl phosphate to yield N-acetyl-L-glutamate 5-semialdehyde.</text>
</comment>
<comment type="catalytic activity">
    <reaction evidence="1">
        <text>N-acetyl-L-glutamate 5-semialdehyde + phosphate + NADP(+) = N-acetyl-L-glutamyl 5-phosphate + NADPH + H(+)</text>
        <dbReference type="Rhea" id="RHEA:21588"/>
        <dbReference type="ChEBI" id="CHEBI:15378"/>
        <dbReference type="ChEBI" id="CHEBI:29123"/>
        <dbReference type="ChEBI" id="CHEBI:43474"/>
        <dbReference type="ChEBI" id="CHEBI:57783"/>
        <dbReference type="ChEBI" id="CHEBI:57936"/>
        <dbReference type="ChEBI" id="CHEBI:58349"/>
        <dbReference type="EC" id="1.2.1.38"/>
    </reaction>
</comment>
<comment type="pathway">
    <text evidence="1">Amino-acid biosynthesis; L-arginine biosynthesis; N(2)-acetyl-L-ornithine from L-glutamate: step 3/4.</text>
</comment>
<comment type="subcellular location">
    <subcellularLocation>
        <location evidence="1">Cytoplasm</location>
    </subcellularLocation>
</comment>
<comment type="similarity">
    <text evidence="1">Belongs to the NAGSA dehydrogenase family. Type 1 subfamily.</text>
</comment>
<keyword id="KW-0028">Amino-acid biosynthesis</keyword>
<keyword id="KW-0055">Arginine biosynthesis</keyword>
<keyword id="KW-0963">Cytoplasm</keyword>
<keyword id="KW-0521">NADP</keyword>
<keyword id="KW-0560">Oxidoreductase</keyword>
<accession>B8HY92</accession>
<gene>
    <name evidence="1" type="primary">argC</name>
    <name type="ordered locus">Cyan7425_2538</name>
</gene>
<organism>
    <name type="scientific">Cyanothece sp. (strain PCC 7425 / ATCC 29141)</name>
    <dbReference type="NCBI Taxonomy" id="395961"/>
    <lineage>
        <taxon>Bacteria</taxon>
        <taxon>Bacillati</taxon>
        <taxon>Cyanobacteriota</taxon>
        <taxon>Cyanophyceae</taxon>
        <taxon>Gomontiellales</taxon>
        <taxon>Cyanothecaceae</taxon>
        <taxon>Cyanothece</taxon>
    </lineage>
</organism>
<proteinExistence type="inferred from homology"/>
<sequence length="352" mass="38092">MSSQGKVPVGIVGASGYGGVQLVRLLVDHPHLELAYLGGEGSAGRPYTDLYPHLQGCVDLLVEPVDLEAIAARCAVVFLALPNGLAVDLAPTLLQRGCRVLDLSADYRFSELKTYTLWYGKERQDQAVAATAVYGLPELYRDRIAEAQLIGCPGCYPTASLLALSPLMKQGLIVPETAIIDAKSGTSGGGRQGKINLLLAEAEGSLGAYNVGHHRHTPEIEQICSDLAGHEVMVQFTPHLIPMPRGILATVYATLRDPGLEREDLLTIYRAFYRNSPWVKILPSGTYPQTKWACGTNLCYIGIEVDSRTGRVIVMSAIDNLLKGQSGQAVQCLNLMMGWEETLGLPQLAFYP</sequence>
<feature type="chain" id="PRO_1000123240" description="N-acetyl-gamma-glutamyl-phosphate reductase">
    <location>
        <begin position="1"/>
        <end position="352"/>
    </location>
</feature>
<feature type="active site" evidence="1">
    <location>
        <position position="155"/>
    </location>
</feature>
<name>ARGC_CYAP4</name>
<reference key="1">
    <citation type="journal article" date="2011" name="MBio">
        <title>Novel metabolic attributes of the genus Cyanothece, comprising a group of unicellular nitrogen-fixing Cyanobacteria.</title>
        <authorList>
            <person name="Bandyopadhyay A."/>
            <person name="Elvitigala T."/>
            <person name="Welsh E."/>
            <person name="Stockel J."/>
            <person name="Liberton M."/>
            <person name="Min H."/>
            <person name="Sherman L.A."/>
            <person name="Pakrasi H.B."/>
        </authorList>
    </citation>
    <scope>NUCLEOTIDE SEQUENCE [LARGE SCALE GENOMIC DNA]</scope>
    <source>
        <strain>PCC 7425 / ATCC 29141</strain>
    </source>
</reference>
<evidence type="ECO:0000255" key="1">
    <source>
        <dbReference type="HAMAP-Rule" id="MF_00150"/>
    </source>
</evidence>